<sequence length="714" mass="81703">MYTKERERELIQRTKELLKIKKEHIKTKEDAEAIIEDLRDVIRYHDWRYYVLANPVISDYEYDQLFHLLKDIESRFPELITPDSPTQRVPSELTKEFPQVKHLAPMLSLDNSYNEEDLREFDRRVREAVGIDIIEYAVEPKFDGAGISLVYEKDMFVRGATRGDGVVGEDITPNIRVIKTVPLSAEFSVYGIDRIEIRGEVLINKEKFKEINHQRLEEGLPPLANPRNAAAGSLRLQDPKEVAKRGLEAFVYQITYAVDKDGNNLLGNKLRYHYDSIKILYELGFKSPYKEIKVCRGIDEVIDYCREWERKRDDYPYEIDGMVIKVNDISLYDRLGVTSHHPRWAIAFKFRARQATTKIIKVVFQVGRTGAVTPVAKLEPVEIGGVTVSSVSLINEDFIKEKDIRVGDLVLIERAGDVIPYVVKVVTEARTGKEKPIQFPKECPSCGSPLVKPAGEAVWRCININCPAQVVERIIYFASKDAMDIRGLGEANIRKFYQLGFLRSIPDIYRLPYDKIIQLEGFGQKSVENLKKAIEESKNRPINRLITGLGIRFVGKVTARTLAENINCVEDLKDWSVEDLERLPDVGYVVAHSIYDFFHNPDNIKMIQELKRLGVQTCKEKEEVVENIFEGKTFVFTGTLSCCSREIAQEIVERLGGHASSSVSRKTSYVVVGENPGSKYRKALSLGVQILDEKQFIEMIKDHIPDDLKDKVHL</sequence>
<organism>
    <name type="scientific">Persephonella marina (strain DSM 14350 / EX-H1)</name>
    <dbReference type="NCBI Taxonomy" id="123214"/>
    <lineage>
        <taxon>Bacteria</taxon>
        <taxon>Pseudomonadati</taxon>
        <taxon>Aquificota</taxon>
        <taxon>Aquificia</taxon>
        <taxon>Aquificales</taxon>
        <taxon>Hydrogenothermaceae</taxon>
        <taxon>Persephonella</taxon>
    </lineage>
</organism>
<evidence type="ECO:0000255" key="1">
    <source>
        <dbReference type="HAMAP-Rule" id="MF_01588"/>
    </source>
</evidence>
<name>DNLJ_PERMH</name>
<accession>C0QSF6</accession>
<feature type="chain" id="PRO_0000380438" description="DNA ligase">
    <location>
        <begin position="1"/>
        <end position="714"/>
    </location>
</feature>
<feature type="domain" description="BRCT" evidence="1">
    <location>
        <begin position="624"/>
        <end position="713"/>
    </location>
</feature>
<feature type="active site" description="N6-AMP-lysine intermediate" evidence="1">
    <location>
        <position position="141"/>
    </location>
</feature>
<feature type="binding site" evidence="1">
    <location>
        <begin position="59"/>
        <end position="63"/>
    </location>
    <ligand>
        <name>NAD(+)</name>
        <dbReference type="ChEBI" id="CHEBI:57540"/>
    </ligand>
</feature>
<feature type="binding site" evidence="1">
    <location>
        <begin position="108"/>
        <end position="109"/>
    </location>
    <ligand>
        <name>NAD(+)</name>
        <dbReference type="ChEBI" id="CHEBI:57540"/>
    </ligand>
</feature>
<feature type="binding site" evidence="1">
    <location>
        <position position="139"/>
    </location>
    <ligand>
        <name>NAD(+)</name>
        <dbReference type="ChEBI" id="CHEBI:57540"/>
    </ligand>
</feature>
<feature type="binding site" evidence="1">
    <location>
        <position position="162"/>
    </location>
    <ligand>
        <name>NAD(+)</name>
        <dbReference type="ChEBI" id="CHEBI:57540"/>
    </ligand>
</feature>
<feature type="binding site" evidence="1">
    <location>
        <position position="200"/>
    </location>
    <ligand>
        <name>NAD(+)</name>
        <dbReference type="ChEBI" id="CHEBI:57540"/>
    </ligand>
</feature>
<feature type="binding site" evidence="1">
    <location>
        <position position="325"/>
    </location>
    <ligand>
        <name>NAD(+)</name>
        <dbReference type="ChEBI" id="CHEBI:57540"/>
    </ligand>
</feature>
<feature type="binding site" evidence="1">
    <location>
        <position position="349"/>
    </location>
    <ligand>
        <name>NAD(+)</name>
        <dbReference type="ChEBI" id="CHEBI:57540"/>
    </ligand>
</feature>
<feature type="binding site" evidence="1">
    <location>
        <position position="443"/>
    </location>
    <ligand>
        <name>Zn(2+)</name>
        <dbReference type="ChEBI" id="CHEBI:29105"/>
    </ligand>
</feature>
<feature type="binding site" evidence="1">
    <location>
        <position position="446"/>
    </location>
    <ligand>
        <name>Zn(2+)</name>
        <dbReference type="ChEBI" id="CHEBI:29105"/>
    </ligand>
</feature>
<feature type="binding site" evidence="1">
    <location>
        <position position="461"/>
    </location>
    <ligand>
        <name>Zn(2+)</name>
        <dbReference type="ChEBI" id="CHEBI:29105"/>
    </ligand>
</feature>
<feature type="binding site" evidence="1">
    <location>
        <position position="466"/>
    </location>
    <ligand>
        <name>Zn(2+)</name>
        <dbReference type="ChEBI" id="CHEBI:29105"/>
    </ligand>
</feature>
<protein>
    <recommendedName>
        <fullName evidence="1">DNA ligase</fullName>
        <ecNumber evidence="1">6.5.1.2</ecNumber>
    </recommendedName>
    <alternativeName>
        <fullName evidence="1">Polydeoxyribonucleotide synthase [NAD(+)]</fullName>
    </alternativeName>
</protein>
<dbReference type="EC" id="6.5.1.2" evidence="1"/>
<dbReference type="EMBL" id="CP001230">
    <property type="protein sequence ID" value="ACO03760.1"/>
    <property type="molecule type" value="Genomic_DNA"/>
</dbReference>
<dbReference type="RefSeq" id="WP_012675999.1">
    <property type="nucleotide sequence ID" value="NC_012440.1"/>
</dbReference>
<dbReference type="SMR" id="C0QSF6"/>
<dbReference type="STRING" id="123214.PERMA_1840"/>
<dbReference type="PaxDb" id="123214-PERMA_1840"/>
<dbReference type="KEGG" id="pmx:PERMA_1840"/>
<dbReference type="eggNOG" id="COG0272">
    <property type="taxonomic scope" value="Bacteria"/>
</dbReference>
<dbReference type="HOGENOM" id="CLU_007764_2_1_0"/>
<dbReference type="OrthoDB" id="9759736at2"/>
<dbReference type="Proteomes" id="UP000001366">
    <property type="component" value="Chromosome"/>
</dbReference>
<dbReference type="GO" id="GO:0005829">
    <property type="term" value="C:cytosol"/>
    <property type="evidence" value="ECO:0007669"/>
    <property type="project" value="TreeGrafter"/>
</dbReference>
<dbReference type="GO" id="GO:0003677">
    <property type="term" value="F:DNA binding"/>
    <property type="evidence" value="ECO:0007669"/>
    <property type="project" value="InterPro"/>
</dbReference>
<dbReference type="GO" id="GO:0003911">
    <property type="term" value="F:DNA ligase (NAD+) activity"/>
    <property type="evidence" value="ECO:0007669"/>
    <property type="project" value="UniProtKB-UniRule"/>
</dbReference>
<dbReference type="GO" id="GO:0046872">
    <property type="term" value="F:metal ion binding"/>
    <property type="evidence" value="ECO:0007669"/>
    <property type="project" value="UniProtKB-KW"/>
</dbReference>
<dbReference type="GO" id="GO:0006281">
    <property type="term" value="P:DNA repair"/>
    <property type="evidence" value="ECO:0007669"/>
    <property type="project" value="UniProtKB-KW"/>
</dbReference>
<dbReference type="GO" id="GO:0006260">
    <property type="term" value="P:DNA replication"/>
    <property type="evidence" value="ECO:0007669"/>
    <property type="project" value="UniProtKB-KW"/>
</dbReference>
<dbReference type="CDD" id="cd17748">
    <property type="entry name" value="BRCT_DNA_ligase_like"/>
    <property type="match status" value="1"/>
</dbReference>
<dbReference type="CDD" id="cd00114">
    <property type="entry name" value="LIGANc"/>
    <property type="match status" value="1"/>
</dbReference>
<dbReference type="FunFam" id="1.10.150.20:FF:000006">
    <property type="entry name" value="DNA ligase"/>
    <property type="match status" value="1"/>
</dbReference>
<dbReference type="FunFam" id="1.10.150.20:FF:000007">
    <property type="entry name" value="DNA ligase"/>
    <property type="match status" value="1"/>
</dbReference>
<dbReference type="FunFam" id="2.40.50.140:FF:000012">
    <property type="entry name" value="DNA ligase"/>
    <property type="match status" value="1"/>
</dbReference>
<dbReference type="FunFam" id="3.30.470.30:FF:000001">
    <property type="entry name" value="DNA ligase"/>
    <property type="match status" value="1"/>
</dbReference>
<dbReference type="Gene3D" id="6.20.10.30">
    <property type="match status" value="1"/>
</dbReference>
<dbReference type="Gene3D" id="1.10.150.20">
    <property type="entry name" value="5' to 3' exonuclease, C-terminal subdomain"/>
    <property type="match status" value="2"/>
</dbReference>
<dbReference type="Gene3D" id="3.40.50.10190">
    <property type="entry name" value="BRCT domain"/>
    <property type="match status" value="1"/>
</dbReference>
<dbReference type="Gene3D" id="3.30.470.30">
    <property type="entry name" value="DNA ligase/mRNA capping enzyme"/>
    <property type="match status" value="1"/>
</dbReference>
<dbReference type="Gene3D" id="1.10.287.610">
    <property type="entry name" value="Helix hairpin bin"/>
    <property type="match status" value="1"/>
</dbReference>
<dbReference type="Gene3D" id="2.40.50.140">
    <property type="entry name" value="Nucleic acid-binding proteins"/>
    <property type="match status" value="1"/>
</dbReference>
<dbReference type="HAMAP" id="MF_01588">
    <property type="entry name" value="DNA_ligase_A"/>
    <property type="match status" value="1"/>
</dbReference>
<dbReference type="InterPro" id="IPR001357">
    <property type="entry name" value="BRCT_dom"/>
</dbReference>
<dbReference type="InterPro" id="IPR036420">
    <property type="entry name" value="BRCT_dom_sf"/>
</dbReference>
<dbReference type="InterPro" id="IPR041663">
    <property type="entry name" value="DisA/LigA_HHH"/>
</dbReference>
<dbReference type="InterPro" id="IPR001679">
    <property type="entry name" value="DNA_ligase"/>
</dbReference>
<dbReference type="InterPro" id="IPR018239">
    <property type="entry name" value="DNA_ligase_AS"/>
</dbReference>
<dbReference type="InterPro" id="IPR033136">
    <property type="entry name" value="DNA_ligase_CS"/>
</dbReference>
<dbReference type="InterPro" id="IPR013839">
    <property type="entry name" value="DNAligase_adenylation"/>
</dbReference>
<dbReference type="InterPro" id="IPR013840">
    <property type="entry name" value="DNAligase_N"/>
</dbReference>
<dbReference type="InterPro" id="IPR003583">
    <property type="entry name" value="Hlx-hairpin-Hlx_DNA-bd_motif"/>
</dbReference>
<dbReference type="InterPro" id="IPR012340">
    <property type="entry name" value="NA-bd_OB-fold"/>
</dbReference>
<dbReference type="InterPro" id="IPR004150">
    <property type="entry name" value="NAD_DNA_ligase_OB"/>
</dbReference>
<dbReference type="InterPro" id="IPR010994">
    <property type="entry name" value="RuvA_2-like"/>
</dbReference>
<dbReference type="InterPro" id="IPR004149">
    <property type="entry name" value="Znf_DNAligase_C4"/>
</dbReference>
<dbReference type="NCBIfam" id="TIGR00575">
    <property type="entry name" value="dnlj"/>
    <property type="match status" value="1"/>
</dbReference>
<dbReference type="NCBIfam" id="NF005932">
    <property type="entry name" value="PRK07956.1"/>
    <property type="match status" value="1"/>
</dbReference>
<dbReference type="PANTHER" id="PTHR23389">
    <property type="entry name" value="CHROMOSOME TRANSMISSION FIDELITY FACTOR 18"/>
    <property type="match status" value="1"/>
</dbReference>
<dbReference type="PANTHER" id="PTHR23389:SF9">
    <property type="entry name" value="DNA LIGASE"/>
    <property type="match status" value="1"/>
</dbReference>
<dbReference type="Pfam" id="PF00533">
    <property type="entry name" value="BRCT"/>
    <property type="match status" value="1"/>
</dbReference>
<dbReference type="Pfam" id="PF01653">
    <property type="entry name" value="DNA_ligase_aden"/>
    <property type="match status" value="1"/>
</dbReference>
<dbReference type="Pfam" id="PF03120">
    <property type="entry name" value="DNA_ligase_OB"/>
    <property type="match status" value="1"/>
</dbReference>
<dbReference type="Pfam" id="PF03119">
    <property type="entry name" value="DNA_ligase_ZBD"/>
    <property type="match status" value="1"/>
</dbReference>
<dbReference type="Pfam" id="PF12826">
    <property type="entry name" value="HHH_2"/>
    <property type="match status" value="1"/>
</dbReference>
<dbReference type="Pfam" id="PF22745">
    <property type="entry name" value="Nlig-Ia"/>
    <property type="match status" value="1"/>
</dbReference>
<dbReference type="PIRSF" id="PIRSF001604">
    <property type="entry name" value="LigA"/>
    <property type="match status" value="1"/>
</dbReference>
<dbReference type="SMART" id="SM00292">
    <property type="entry name" value="BRCT"/>
    <property type="match status" value="1"/>
</dbReference>
<dbReference type="SMART" id="SM00278">
    <property type="entry name" value="HhH1"/>
    <property type="match status" value="3"/>
</dbReference>
<dbReference type="SMART" id="SM00532">
    <property type="entry name" value="LIGANc"/>
    <property type="match status" value="1"/>
</dbReference>
<dbReference type="SUPFAM" id="SSF52113">
    <property type="entry name" value="BRCT domain"/>
    <property type="match status" value="1"/>
</dbReference>
<dbReference type="SUPFAM" id="SSF56091">
    <property type="entry name" value="DNA ligase/mRNA capping enzyme, catalytic domain"/>
    <property type="match status" value="1"/>
</dbReference>
<dbReference type="SUPFAM" id="SSF50249">
    <property type="entry name" value="Nucleic acid-binding proteins"/>
    <property type="match status" value="1"/>
</dbReference>
<dbReference type="SUPFAM" id="SSF47781">
    <property type="entry name" value="RuvA domain 2-like"/>
    <property type="match status" value="1"/>
</dbReference>
<dbReference type="PROSITE" id="PS50172">
    <property type="entry name" value="BRCT"/>
    <property type="match status" value="1"/>
</dbReference>
<dbReference type="PROSITE" id="PS01055">
    <property type="entry name" value="DNA_LIGASE_N1"/>
    <property type="match status" value="1"/>
</dbReference>
<dbReference type="PROSITE" id="PS01056">
    <property type="entry name" value="DNA_LIGASE_N2"/>
    <property type="match status" value="1"/>
</dbReference>
<keyword id="KW-0227">DNA damage</keyword>
<keyword id="KW-0234">DNA repair</keyword>
<keyword id="KW-0235">DNA replication</keyword>
<keyword id="KW-0436">Ligase</keyword>
<keyword id="KW-0460">Magnesium</keyword>
<keyword id="KW-0464">Manganese</keyword>
<keyword id="KW-0479">Metal-binding</keyword>
<keyword id="KW-0520">NAD</keyword>
<keyword id="KW-1185">Reference proteome</keyword>
<keyword id="KW-0862">Zinc</keyword>
<reference key="1">
    <citation type="journal article" date="2009" name="J. Bacteriol.">
        <title>Complete and draft genome sequences of six members of the Aquificales.</title>
        <authorList>
            <person name="Reysenbach A.-L."/>
            <person name="Hamamura N."/>
            <person name="Podar M."/>
            <person name="Griffiths E."/>
            <person name="Ferreira S."/>
            <person name="Hochstein R."/>
            <person name="Heidelberg J."/>
            <person name="Johnson J."/>
            <person name="Mead D."/>
            <person name="Pohorille A."/>
            <person name="Sarmiento M."/>
            <person name="Schweighofer K."/>
            <person name="Seshadri R."/>
            <person name="Voytek M.A."/>
        </authorList>
    </citation>
    <scope>NUCLEOTIDE SEQUENCE [LARGE SCALE GENOMIC DNA]</scope>
    <source>
        <strain>DSM 14350 / EX-H1</strain>
    </source>
</reference>
<proteinExistence type="inferred from homology"/>
<gene>
    <name evidence="1" type="primary">ligA</name>
    <name type="ordered locus">PERMA_1840</name>
</gene>
<comment type="function">
    <text evidence="1">DNA ligase that catalyzes the formation of phosphodiester linkages between 5'-phosphoryl and 3'-hydroxyl groups in double-stranded DNA using NAD as a coenzyme and as the energy source for the reaction. It is essential for DNA replication and repair of damaged DNA.</text>
</comment>
<comment type="catalytic activity">
    <reaction evidence="1">
        <text>NAD(+) + (deoxyribonucleotide)n-3'-hydroxyl + 5'-phospho-(deoxyribonucleotide)m = (deoxyribonucleotide)n+m + AMP + beta-nicotinamide D-nucleotide.</text>
        <dbReference type="EC" id="6.5.1.2"/>
    </reaction>
</comment>
<comment type="cofactor">
    <cofactor evidence="1">
        <name>Mg(2+)</name>
        <dbReference type="ChEBI" id="CHEBI:18420"/>
    </cofactor>
    <cofactor evidence="1">
        <name>Mn(2+)</name>
        <dbReference type="ChEBI" id="CHEBI:29035"/>
    </cofactor>
</comment>
<comment type="similarity">
    <text evidence="1">Belongs to the NAD-dependent DNA ligase family. LigA subfamily.</text>
</comment>